<keyword id="KW-0456">Lyase</keyword>
<keyword id="KW-0663">Pyridoxal phosphate</keyword>
<keyword id="KW-1185">Reference proteome</keyword>
<keyword id="KW-0704">Schiff base</keyword>
<reference key="1">
    <citation type="journal article" date="2008" name="PLoS ONE">
        <title>Genetic basis of virulence attenuation revealed by comparative genomic analysis of Mycobacterium tuberculosis strain H37Ra versus H37Rv.</title>
        <authorList>
            <person name="Zheng H."/>
            <person name="Lu L."/>
            <person name="Wang B."/>
            <person name="Pu S."/>
            <person name="Zhang X."/>
            <person name="Zhu G."/>
            <person name="Shi W."/>
            <person name="Zhang L."/>
            <person name="Wang H."/>
            <person name="Wang S."/>
            <person name="Zhao G."/>
            <person name="Zhang Y."/>
        </authorList>
    </citation>
    <scope>NUCLEOTIDE SEQUENCE [LARGE SCALE GENOMIC DNA]</scope>
    <source>
        <strain>ATCC 25177 / H37Ra</strain>
    </source>
</reference>
<accession>A5U5V7</accession>
<name>PDXS_MYCTA</name>
<dbReference type="EC" id="4.3.3.6" evidence="1"/>
<dbReference type="EMBL" id="CP000611">
    <property type="protein sequence ID" value="ABQ74407.1"/>
    <property type="molecule type" value="Genomic_DNA"/>
</dbReference>
<dbReference type="RefSeq" id="WP_003413468.1">
    <property type="nucleotide sequence ID" value="NZ_CP016972.1"/>
</dbReference>
<dbReference type="SMR" id="A5U5V7"/>
<dbReference type="GeneID" id="45426609"/>
<dbReference type="KEGG" id="mra:MRA_2634"/>
<dbReference type="eggNOG" id="COG0214">
    <property type="taxonomic scope" value="Bacteria"/>
</dbReference>
<dbReference type="HOGENOM" id="CLU_055352_1_0_11"/>
<dbReference type="UniPathway" id="UPA00245"/>
<dbReference type="Proteomes" id="UP000001988">
    <property type="component" value="Chromosome"/>
</dbReference>
<dbReference type="GO" id="GO:0036381">
    <property type="term" value="F:pyridoxal 5'-phosphate synthase (glutamine hydrolysing) activity"/>
    <property type="evidence" value="ECO:0007669"/>
    <property type="project" value="UniProtKB-UniRule"/>
</dbReference>
<dbReference type="GO" id="GO:0006520">
    <property type="term" value="P:amino acid metabolic process"/>
    <property type="evidence" value="ECO:0007669"/>
    <property type="project" value="TreeGrafter"/>
</dbReference>
<dbReference type="GO" id="GO:0042823">
    <property type="term" value="P:pyridoxal phosphate biosynthetic process"/>
    <property type="evidence" value="ECO:0007669"/>
    <property type="project" value="UniProtKB-UniRule"/>
</dbReference>
<dbReference type="GO" id="GO:0008615">
    <property type="term" value="P:pyridoxine biosynthetic process"/>
    <property type="evidence" value="ECO:0007669"/>
    <property type="project" value="TreeGrafter"/>
</dbReference>
<dbReference type="CDD" id="cd04727">
    <property type="entry name" value="pdxS"/>
    <property type="match status" value="1"/>
</dbReference>
<dbReference type="FunFam" id="3.20.20.70:FF:000001">
    <property type="entry name" value="Pyridoxine biosynthesis protein PDX1"/>
    <property type="match status" value="1"/>
</dbReference>
<dbReference type="Gene3D" id="3.20.20.70">
    <property type="entry name" value="Aldolase class I"/>
    <property type="match status" value="1"/>
</dbReference>
<dbReference type="HAMAP" id="MF_01824">
    <property type="entry name" value="PdxS"/>
    <property type="match status" value="1"/>
</dbReference>
<dbReference type="InterPro" id="IPR013785">
    <property type="entry name" value="Aldolase_TIM"/>
</dbReference>
<dbReference type="InterPro" id="IPR001852">
    <property type="entry name" value="PdxS/SNZ"/>
</dbReference>
<dbReference type="InterPro" id="IPR033755">
    <property type="entry name" value="PdxS/SNZ_N"/>
</dbReference>
<dbReference type="InterPro" id="IPR011060">
    <property type="entry name" value="RibuloseP-bd_barrel"/>
</dbReference>
<dbReference type="NCBIfam" id="NF003215">
    <property type="entry name" value="PRK04180.1"/>
    <property type="match status" value="1"/>
</dbReference>
<dbReference type="NCBIfam" id="TIGR00343">
    <property type="entry name" value="pyridoxal 5'-phosphate synthase lyase subunit PdxS"/>
    <property type="match status" value="1"/>
</dbReference>
<dbReference type="PANTHER" id="PTHR31829">
    <property type="entry name" value="PYRIDOXAL 5'-PHOSPHATE SYNTHASE SUBUNIT SNZ1-RELATED"/>
    <property type="match status" value="1"/>
</dbReference>
<dbReference type="PANTHER" id="PTHR31829:SF0">
    <property type="entry name" value="PYRIDOXAL 5'-PHOSPHATE SYNTHASE SUBUNIT SNZ1-RELATED"/>
    <property type="match status" value="1"/>
</dbReference>
<dbReference type="Pfam" id="PF01680">
    <property type="entry name" value="SOR_SNZ"/>
    <property type="match status" value="1"/>
</dbReference>
<dbReference type="PIRSF" id="PIRSF029271">
    <property type="entry name" value="Pdx1"/>
    <property type="match status" value="1"/>
</dbReference>
<dbReference type="SUPFAM" id="SSF51366">
    <property type="entry name" value="Ribulose-phoshate binding barrel"/>
    <property type="match status" value="1"/>
</dbReference>
<dbReference type="PROSITE" id="PS01235">
    <property type="entry name" value="PDXS_SNZ_1"/>
    <property type="match status" value="1"/>
</dbReference>
<dbReference type="PROSITE" id="PS51129">
    <property type="entry name" value="PDXS_SNZ_2"/>
    <property type="match status" value="1"/>
</dbReference>
<organism>
    <name type="scientific">Mycobacterium tuberculosis (strain ATCC 25177 / H37Ra)</name>
    <dbReference type="NCBI Taxonomy" id="419947"/>
    <lineage>
        <taxon>Bacteria</taxon>
        <taxon>Bacillati</taxon>
        <taxon>Actinomycetota</taxon>
        <taxon>Actinomycetes</taxon>
        <taxon>Mycobacteriales</taxon>
        <taxon>Mycobacteriaceae</taxon>
        <taxon>Mycobacterium</taxon>
        <taxon>Mycobacterium tuberculosis complex</taxon>
    </lineage>
</organism>
<comment type="function">
    <text evidence="1">Catalyzes the formation of pyridoxal 5'-phosphate from ribose 5-phosphate (RBP), glyceraldehyde 3-phosphate (G3P) and ammonia. The ammonia is provided by the PdxT subunit. Can also use ribulose 5-phosphate and dihydroxyacetone phosphate as substrates, resulting from enzyme-catalyzed isomerization of RBP and G3P, respectively.</text>
</comment>
<comment type="catalytic activity">
    <reaction evidence="1">
        <text>aldehydo-D-ribose 5-phosphate + D-glyceraldehyde 3-phosphate + L-glutamine = pyridoxal 5'-phosphate + L-glutamate + phosphate + 3 H2O + H(+)</text>
        <dbReference type="Rhea" id="RHEA:31507"/>
        <dbReference type="ChEBI" id="CHEBI:15377"/>
        <dbReference type="ChEBI" id="CHEBI:15378"/>
        <dbReference type="ChEBI" id="CHEBI:29985"/>
        <dbReference type="ChEBI" id="CHEBI:43474"/>
        <dbReference type="ChEBI" id="CHEBI:58273"/>
        <dbReference type="ChEBI" id="CHEBI:58359"/>
        <dbReference type="ChEBI" id="CHEBI:59776"/>
        <dbReference type="ChEBI" id="CHEBI:597326"/>
        <dbReference type="EC" id="4.3.3.6"/>
    </reaction>
</comment>
<comment type="pathway">
    <text evidence="1">Cofactor biosynthesis; pyridoxal 5'-phosphate biosynthesis.</text>
</comment>
<comment type="subunit">
    <text evidence="1">In the presence of PdxT, forms a dodecamer of heterodimers.</text>
</comment>
<comment type="similarity">
    <text evidence="1">Belongs to the PdxS/SNZ family.</text>
</comment>
<gene>
    <name evidence="1" type="primary">pdxS</name>
    <name type="ordered locus">MRA_2634</name>
</gene>
<evidence type="ECO:0000255" key="1">
    <source>
        <dbReference type="HAMAP-Rule" id="MF_01824"/>
    </source>
</evidence>
<protein>
    <recommendedName>
        <fullName evidence="1">Pyridoxal 5'-phosphate synthase subunit PdxS</fullName>
        <shortName evidence="1">PLP synthase subunit PdxS</shortName>
        <ecNumber evidence="1">4.3.3.6</ecNumber>
    </recommendedName>
    <alternativeName>
        <fullName evidence="1">Pdx1</fullName>
    </alternativeName>
</protein>
<proteinExistence type="inferred from homology"/>
<feature type="chain" id="PRO_1000070391" description="Pyridoxal 5'-phosphate synthase subunit PdxS">
    <location>
        <begin position="1"/>
        <end position="299"/>
    </location>
</feature>
<feature type="active site" description="Schiff-base intermediate with D-ribose 5-phosphate" evidence="1">
    <location>
        <position position="86"/>
    </location>
</feature>
<feature type="binding site" evidence="1">
    <location>
        <position position="29"/>
    </location>
    <ligand>
        <name>D-ribose 5-phosphate</name>
        <dbReference type="ChEBI" id="CHEBI:78346"/>
    </ligand>
</feature>
<feature type="binding site" evidence="1">
    <location>
        <position position="158"/>
    </location>
    <ligand>
        <name>D-ribose 5-phosphate</name>
        <dbReference type="ChEBI" id="CHEBI:78346"/>
    </ligand>
</feature>
<feature type="binding site" evidence="1">
    <location>
        <position position="170"/>
    </location>
    <ligand>
        <name>D-glyceraldehyde 3-phosphate</name>
        <dbReference type="ChEBI" id="CHEBI:59776"/>
    </ligand>
</feature>
<feature type="binding site" evidence="1">
    <location>
        <position position="219"/>
    </location>
    <ligand>
        <name>D-ribose 5-phosphate</name>
        <dbReference type="ChEBI" id="CHEBI:78346"/>
    </ligand>
</feature>
<feature type="binding site" evidence="1">
    <location>
        <begin position="240"/>
        <end position="241"/>
    </location>
    <ligand>
        <name>D-ribose 5-phosphate</name>
        <dbReference type="ChEBI" id="CHEBI:78346"/>
    </ligand>
</feature>
<sequence>MDPAGNPATGTARVKRGMAEMLKGGVIMDVVTPEQARIAEGAGAVAVMALERVPADIRAQGGVSRMSDPDMIEGIIAAVTIPVMAKVRIGHFVEAQILQTLGVDYIDESEVLTPADYAHHIDKWNFTVPFVCGATNLGEALRRISEGAAMIRSKGEAGTGDVSNATTHMRAIGGEIRRLTSMSEDELFVAAKELQAPYELVAEVARAGKLPVTLFTAGGIATPADAAMMMQLGAEGVFVGSGIFKSGAPEHRAAAIVKATTFFDDPDVLAKVSRGLGEAMVGINVDEIAVGHRLAQRGW</sequence>